<gene>
    <name evidence="1" type="primary">rnc</name>
    <name type="ordered locus">SG1787</name>
</gene>
<reference key="1">
    <citation type="journal article" date="2006" name="Genome Res.">
        <title>Massive genome erosion and functional adaptations provide insights into the symbiotic lifestyle of Sodalis glossinidius in the tsetse host.</title>
        <authorList>
            <person name="Toh H."/>
            <person name="Weiss B.L."/>
            <person name="Perkin S.A.H."/>
            <person name="Yamashita A."/>
            <person name="Oshima K."/>
            <person name="Hattori M."/>
            <person name="Aksoy S."/>
        </authorList>
    </citation>
    <scope>NUCLEOTIDE SEQUENCE [LARGE SCALE GENOMIC DNA]</scope>
    <source>
        <strain>morsitans</strain>
    </source>
</reference>
<organism>
    <name type="scientific">Sodalis glossinidius (strain morsitans)</name>
    <dbReference type="NCBI Taxonomy" id="343509"/>
    <lineage>
        <taxon>Bacteria</taxon>
        <taxon>Pseudomonadati</taxon>
        <taxon>Pseudomonadota</taxon>
        <taxon>Gammaproteobacteria</taxon>
        <taxon>Enterobacterales</taxon>
        <taxon>Bruguierivoracaceae</taxon>
        <taxon>Sodalis</taxon>
    </lineage>
</organism>
<protein>
    <recommendedName>
        <fullName evidence="1">Ribonuclease 3</fullName>
        <ecNumber evidence="1">3.1.26.3</ecNumber>
    </recommendedName>
    <alternativeName>
        <fullName evidence="1">Ribonuclease III</fullName>
        <shortName evidence="1">RNase III</shortName>
    </alternativeName>
</protein>
<evidence type="ECO:0000255" key="1">
    <source>
        <dbReference type="HAMAP-Rule" id="MF_00104"/>
    </source>
</evidence>
<feature type="chain" id="PRO_1000075824" description="Ribonuclease 3">
    <location>
        <begin position="1"/>
        <end position="226"/>
    </location>
</feature>
<feature type="domain" description="RNase III" evidence="1">
    <location>
        <begin position="6"/>
        <end position="128"/>
    </location>
</feature>
<feature type="domain" description="DRBM" evidence="1">
    <location>
        <begin position="155"/>
        <end position="225"/>
    </location>
</feature>
<feature type="active site" evidence="1">
    <location>
        <position position="45"/>
    </location>
</feature>
<feature type="active site" evidence="1">
    <location>
        <position position="117"/>
    </location>
</feature>
<feature type="binding site" evidence="1">
    <location>
        <position position="41"/>
    </location>
    <ligand>
        <name>Mg(2+)</name>
        <dbReference type="ChEBI" id="CHEBI:18420"/>
    </ligand>
</feature>
<feature type="binding site" evidence="1">
    <location>
        <position position="114"/>
    </location>
    <ligand>
        <name>Mg(2+)</name>
        <dbReference type="ChEBI" id="CHEBI:18420"/>
    </ligand>
</feature>
<feature type="binding site" evidence="1">
    <location>
        <position position="117"/>
    </location>
    <ligand>
        <name>Mg(2+)</name>
        <dbReference type="ChEBI" id="CHEBI:18420"/>
    </ligand>
</feature>
<name>RNC_SODGM</name>
<keyword id="KW-0963">Cytoplasm</keyword>
<keyword id="KW-0255">Endonuclease</keyword>
<keyword id="KW-0378">Hydrolase</keyword>
<keyword id="KW-0460">Magnesium</keyword>
<keyword id="KW-0479">Metal-binding</keyword>
<keyword id="KW-0507">mRNA processing</keyword>
<keyword id="KW-0540">Nuclease</keyword>
<keyword id="KW-0694">RNA-binding</keyword>
<keyword id="KW-0698">rRNA processing</keyword>
<keyword id="KW-0699">rRNA-binding</keyword>
<keyword id="KW-0819">tRNA processing</keyword>
<dbReference type="EC" id="3.1.26.3" evidence="1"/>
<dbReference type="EMBL" id="AP008232">
    <property type="protein sequence ID" value="BAE75062.1"/>
    <property type="molecule type" value="Genomic_DNA"/>
</dbReference>
<dbReference type="RefSeq" id="WP_011411611.1">
    <property type="nucleotide sequence ID" value="NC_007712.1"/>
</dbReference>
<dbReference type="SMR" id="Q2NS13"/>
<dbReference type="STRING" id="343509.SG1787"/>
<dbReference type="KEGG" id="sgl:SG1787"/>
<dbReference type="eggNOG" id="COG0571">
    <property type="taxonomic scope" value="Bacteria"/>
</dbReference>
<dbReference type="HOGENOM" id="CLU_000907_1_1_6"/>
<dbReference type="OrthoDB" id="9805026at2"/>
<dbReference type="BioCyc" id="SGLO343509:SGP1_RS16215-MONOMER"/>
<dbReference type="Proteomes" id="UP000001932">
    <property type="component" value="Chromosome"/>
</dbReference>
<dbReference type="GO" id="GO:0005737">
    <property type="term" value="C:cytoplasm"/>
    <property type="evidence" value="ECO:0007669"/>
    <property type="project" value="UniProtKB-SubCell"/>
</dbReference>
<dbReference type="GO" id="GO:0003725">
    <property type="term" value="F:double-stranded RNA binding"/>
    <property type="evidence" value="ECO:0007669"/>
    <property type="project" value="TreeGrafter"/>
</dbReference>
<dbReference type="GO" id="GO:0046872">
    <property type="term" value="F:metal ion binding"/>
    <property type="evidence" value="ECO:0007669"/>
    <property type="project" value="UniProtKB-KW"/>
</dbReference>
<dbReference type="GO" id="GO:0004525">
    <property type="term" value="F:ribonuclease III activity"/>
    <property type="evidence" value="ECO:0007669"/>
    <property type="project" value="UniProtKB-UniRule"/>
</dbReference>
<dbReference type="GO" id="GO:0019843">
    <property type="term" value="F:rRNA binding"/>
    <property type="evidence" value="ECO:0007669"/>
    <property type="project" value="UniProtKB-KW"/>
</dbReference>
<dbReference type="GO" id="GO:0006397">
    <property type="term" value="P:mRNA processing"/>
    <property type="evidence" value="ECO:0007669"/>
    <property type="project" value="UniProtKB-UniRule"/>
</dbReference>
<dbReference type="GO" id="GO:0010468">
    <property type="term" value="P:regulation of gene expression"/>
    <property type="evidence" value="ECO:0007669"/>
    <property type="project" value="TreeGrafter"/>
</dbReference>
<dbReference type="GO" id="GO:0006364">
    <property type="term" value="P:rRNA processing"/>
    <property type="evidence" value="ECO:0007669"/>
    <property type="project" value="UniProtKB-UniRule"/>
</dbReference>
<dbReference type="GO" id="GO:0008033">
    <property type="term" value="P:tRNA processing"/>
    <property type="evidence" value="ECO:0007669"/>
    <property type="project" value="UniProtKB-KW"/>
</dbReference>
<dbReference type="CDD" id="cd10845">
    <property type="entry name" value="DSRM_RNAse_III_family"/>
    <property type="match status" value="1"/>
</dbReference>
<dbReference type="CDD" id="cd00593">
    <property type="entry name" value="RIBOc"/>
    <property type="match status" value="1"/>
</dbReference>
<dbReference type="FunFam" id="1.10.1520.10:FF:000001">
    <property type="entry name" value="Ribonuclease 3"/>
    <property type="match status" value="1"/>
</dbReference>
<dbReference type="FunFam" id="3.30.160.20:FF:000003">
    <property type="entry name" value="Ribonuclease 3"/>
    <property type="match status" value="1"/>
</dbReference>
<dbReference type="Gene3D" id="3.30.160.20">
    <property type="match status" value="1"/>
</dbReference>
<dbReference type="Gene3D" id="1.10.1520.10">
    <property type="entry name" value="Ribonuclease III domain"/>
    <property type="match status" value="1"/>
</dbReference>
<dbReference type="HAMAP" id="MF_00104">
    <property type="entry name" value="RNase_III"/>
    <property type="match status" value="1"/>
</dbReference>
<dbReference type="InterPro" id="IPR014720">
    <property type="entry name" value="dsRBD_dom"/>
</dbReference>
<dbReference type="InterPro" id="IPR011907">
    <property type="entry name" value="RNase_III"/>
</dbReference>
<dbReference type="InterPro" id="IPR000999">
    <property type="entry name" value="RNase_III_dom"/>
</dbReference>
<dbReference type="InterPro" id="IPR036389">
    <property type="entry name" value="RNase_III_sf"/>
</dbReference>
<dbReference type="NCBIfam" id="TIGR02191">
    <property type="entry name" value="RNaseIII"/>
    <property type="match status" value="1"/>
</dbReference>
<dbReference type="PANTHER" id="PTHR11207:SF0">
    <property type="entry name" value="RIBONUCLEASE 3"/>
    <property type="match status" value="1"/>
</dbReference>
<dbReference type="PANTHER" id="PTHR11207">
    <property type="entry name" value="RIBONUCLEASE III"/>
    <property type="match status" value="1"/>
</dbReference>
<dbReference type="Pfam" id="PF00035">
    <property type="entry name" value="dsrm"/>
    <property type="match status" value="1"/>
</dbReference>
<dbReference type="Pfam" id="PF14622">
    <property type="entry name" value="Ribonucleas_3_3"/>
    <property type="match status" value="1"/>
</dbReference>
<dbReference type="SMART" id="SM00358">
    <property type="entry name" value="DSRM"/>
    <property type="match status" value="1"/>
</dbReference>
<dbReference type="SMART" id="SM00535">
    <property type="entry name" value="RIBOc"/>
    <property type="match status" value="1"/>
</dbReference>
<dbReference type="SUPFAM" id="SSF54768">
    <property type="entry name" value="dsRNA-binding domain-like"/>
    <property type="match status" value="1"/>
</dbReference>
<dbReference type="SUPFAM" id="SSF69065">
    <property type="entry name" value="RNase III domain-like"/>
    <property type="match status" value="1"/>
</dbReference>
<dbReference type="PROSITE" id="PS50137">
    <property type="entry name" value="DS_RBD"/>
    <property type="match status" value="1"/>
</dbReference>
<dbReference type="PROSITE" id="PS00517">
    <property type="entry name" value="RNASE_3_1"/>
    <property type="match status" value="1"/>
</dbReference>
<dbReference type="PROSITE" id="PS50142">
    <property type="entry name" value="RNASE_3_2"/>
    <property type="match status" value="1"/>
</dbReference>
<sequence length="226" mass="25557">MNPILTNRLQKKLGYTFQQHDLLLQALTHRSASSKHNERLEFLGDSILSYVIANALYQRFPRVDEGDMSRMRATLVRGNTLAEMAREFELGECLRLGPGELKSGGFRRESILADTVEALIGGVFLDSDIRTVEKLILDWYRSRLDEISPGDKQKDPKTRLQEYLQGRHLPLPTYQVVQVRGEAHDQEFTIHCQVSGLAQPVVGNGSSRRKAEQAAAEQALKLLELE</sequence>
<proteinExistence type="inferred from homology"/>
<accession>Q2NS13</accession>
<comment type="function">
    <text evidence="1">Digests double-stranded RNA. Involved in the processing of primary rRNA transcript to yield the immediate precursors to the large and small rRNAs (23S and 16S). Processes some mRNAs, and tRNAs when they are encoded in the rRNA operon. Processes pre-crRNA and tracrRNA of type II CRISPR loci if present in the organism.</text>
</comment>
<comment type="catalytic activity">
    <reaction evidence="1">
        <text>Endonucleolytic cleavage to 5'-phosphomonoester.</text>
        <dbReference type="EC" id="3.1.26.3"/>
    </reaction>
</comment>
<comment type="cofactor">
    <cofactor evidence="1">
        <name>Mg(2+)</name>
        <dbReference type="ChEBI" id="CHEBI:18420"/>
    </cofactor>
</comment>
<comment type="subunit">
    <text evidence="1">Homodimer.</text>
</comment>
<comment type="subcellular location">
    <subcellularLocation>
        <location evidence="1">Cytoplasm</location>
    </subcellularLocation>
</comment>
<comment type="similarity">
    <text evidence="1">Belongs to the ribonuclease III family.</text>
</comment>